<organism>
    <name type="scientific">Gallus gallus</name>
    <name type="common">Chicken</name>
    <dbReference type="NCBI Taxonomy" id="9031"/>
    <lineage>
        <taxon>Eukaryota</taxon>
        <taxon>Metazoa</taxon>
        <taxon>Chordata</taxon>
        <taxon>Craniata</taxon>
        <taxon>Vertebrata</taxon>
        <taxon>Euteleostomi</taxon>
        <taxon>Archelosauria</taxon>
        <taxon>Archosauria</taxon>
        <taxon>Dinosauria</taxon>
        <taxon>Saurischia</taxon>
        <taxon>Theropoda</taxon>
        <taxon>Coelurosauria</taxon>
        <taxon>Aves</taxon>
        <taxon>Neognathae</taxon>
        <taxon>Galloanserae</taxon>
        <taxon>Galliformes</taxon>
        <taxon>Phasianidae</taxon>
        <taxon>Phasianinae</taxon>
        <taxon>Gallus</taxon>
    </lineage>
</organism>
<comment type="function">
    <text>Receptor tyrosine kinase involved in the development and the maturation of the central and peripheral nervous systems through regulation of proliferation, differentiation and survival of sympathetic and nervous neurons. High affinity receptor for NGF which is its primary ligand, it can also bind and be activated by NTF3/neurotrophin-3. Upon dimeric NGF ligand-binding, undergoes homodimerization, autophosphorylation and activation. Recruits, phosphorylates and/or activates several downstream effectors that regulate distinct overlapping signaling cascades driving cell survival and differentiation. In absence of ligand and activation, may promote cell death, making the survival of neurons dependent on trophic factors.</text>
</comment>
<comment type="catalytic activity">
    <reaction evidence="8">
        <text>L-tyrosyl-[protein] + ATP = O-phospho-L-tyrosyl-[protein] + ADP + H(+)</text>
        <dbReference type="Rhea" id="RHEA:10596"/>
        <dbReference type="Rhea" id="RHEA-COMP:10136"/>
        <dbReference type="Rhea" id="RHEA-COMP:20101"/>
        <dbReference type="ChEBI" id="CHEBI:15378"/>
        <dbReference type="ChEBI" id="CHEBI:30616"/>
        <dbReference type="ChEBI" id="CHEBI:46858"/>
        <dbReference type="ChEBI" id="CHEBI:61978"/>
        <dbReference type="ChEBI" id="CHEBI:456216"/>
        <dbReference type="EC" id="2.7.10.1"/>
    </reaction>
</comment>
<comment type="activity regulation">
    <text evidence="1">The pro-survival signaling effect of NTRK1 in neurons requires its endocytosis into signaling early endosomes and its retrograde axonal transport.</text>
</comment>
<comment type="subunit">
    <text evidence="1 9">Exists in a dynamic equilibrium between monomeric (low affinity) and dimeric (high affinity) structures. Homodimerization is induced by NGF dimer binding (By similarity). Interacts with PTPRS (PubMed:17967490).</text>
</comment>
<comment type="subcellular location">
    <subcellularLocation>
        <location evidence="3">Cell membrane</location>
        <topology evidence="3">Single-pass type I membrane protein</topology>
    </subcellularLocation>
    <subcellularLocation>
        <location evidence="3">Early endosome membrane</location>
        <topology evidence="3">Single-pass type I membrane protein</topology>
    </subcellularLocation>
    <subcellularLocation>
        <location evidence="3">Late endosome membrane</location>
        <topology evidence="3">Single-pass type I membrane protein</topology>
    </subcellularLocation>
    <subcellularLocation>
        <location evidence="3">Recycling endosome membrane</location>
        <topology evidence="3">Single-pass type I membrane protein</topology>
    </subcellularLocation>
    <text evidence="3">Internalized to endosomes upon binding of NGF or NTF3 and further transported to the cell body via a retrograde axonal transport. Localized at cell membrane and early endosomes before nerve growth factor (NGF) stimulation. Recruited to late endosomes after NGF stimulation. Colocalized with RAPGEF2 at late endosomes.</text>
</comment>
<comment type="alternative products">
    <event type="alternative splicing"/>
    <isoform>
        <id>Q91009-1</id>
        <name>1</name>
        <sequence type="displayed"/>
    </isoform>
    <text>2 isoforms are produced.</text>
</comment>
<comment type="developmental stage">
    <text evidence="10">Expressed in the condensing dorsal root ganglia at embryonal day 3, and in the primary sympathetic chain ganglia at embryonal day 4.</text>
</comment>
<comment type="PTM">
    <text evidence="1">Ligand-mediated auto-phosphorylation.</text>
</comment>
<comment type="PTM">
    <text evidence="4">Ubiquitinated. Undergoes polyubiquitination upon activation; regulated by NGFR. Ubiquitination regulates the internalization of the receptor.</text>
</comment>
<comment type="similarity">
    <text evidence="7">Belongs to the protein kinase superfamily. Tyr protein kinase family. Insulin receptor subfamily.</text>
</comment>
<name>NTRK1_CHICK</name>
<protein>
    <recommendedName>
        <fullName>High affinity nerve growth factor receptor</fullName>
        <ecNumber>2.7.10.1</ecNumber>
    </recommendedName>
    <alternativeName>
        <fullName>Neurotrophic tyrosine kinase receptor type 1</fullName>
        <shortName>Trk-A</shortName>
    </alternativeName>
</protein>
<keyword id="KW-0025">Alternative splicing</keyword>
<keyword id="KW-0067">ATP-binding</keyword>
<keyword id="KW-1003">Cell membrane</keyword>
<keyword id="KW-0217">Developmental protein</keyword>
<keyword id="KW-0221">Differentiation</keyword>
<keyword id="KW-1015">Disulfide bond</keyword>
<keyword id="KW-0967">Endosome</keyword>
<keyword id="KW-0325">Glycoprotein</keyword>
<keyword id="KW-0393">Immunoglobulin domain</keyword>
<keyword id="KW-0418">Kinase</keyword>
<keyword id="KW-0433">Leucine-rich repeat</keyword>
<keyword id="KW-0472">Membrane</keyword>
<keyword id="KW-0524">Neurogenesis</keyword>
<keyword id="KW-0547">Nucleotide-binding</keyword>
<keyword id="KW-0597">Phosphoprotein</keyword>
<keyword id="KW-0675">Receptor</keyword>
<keyword id="KW-1185">Reference proteome</keyword>
<keyword id="KW-0677">Repeat</keyword>
<keyword id="KW-0732">Signal</keyword>
<keyword id="KW-0808">Transferase</keyword>
<keyword id="KW-0812">Transmembrane</keyword>
<keyword id="KW-1133">Transmembrane helix</keyword>
<keyword id="KW-0829">Tyrosine-protein kinase</keyword>
<keyword id="KW-0832">Ubl conjugation</keyword>
<dbReference type="EC" id="2.7.10.1"/>
<dbReference type="EMBL" id="X93581">
    <property type="protein sequence ID" value="CAA63785.1"/>
    <property type="molecule type" value="mRNA"/>
</dbReference>
<dbReference type="SMR" id="Q91009"/>
<dbReference type="FunCoup" id="Q91009">
    <property type="interactions" value="52"/>
</dbReference>
<dbReference type="STRING" id="9031.ENSGALP00000021606"/>
<dbReference type="GlyCosmos" id="Q91009">
    <property type="glycosylation" value="11 sites, No reported glycans"/>
</dbReference>
<dbReference type="GlyGen" id="Q91009">
    <property type="glycosylation" value="11 sites"/>
</dbReference>
<dbReference type="PaxDb" id="9031-ENSGALP00000021606"/>
<dbReference type="VEuPathDB" id="HostDB:geneid_396337"/>
<dbReference type="eggNOG" id="KOG1026">
    <property type="taxonomic scope" value="Eukaryota"/>
</dbReference>
<dbReference type="InParanoid" id="Q91009"/>
<dbReference type="OrthoDB" id="10005095at2759"/>
<dbReference type="PhylomeDB" id="Q91009"/>
<dbReference type="Proteomes" id="UP000000539">
    <property type="component" value="Unassembled WGS sequence"/>
</dbReference>
<dbReference type="GO" id="GO:0030424">
    <property type="term" value="C:axon"/>
    <property type="evidence" value="ECO:0000318"/>
    <property type="project" value="GO_Central"/>
</dbReference>
<dbReference type="GO" id="GO:0031901">
    <property type="term" value="C:early endosome membrane"/>
    <property type="evidence" value="ECO:0007669"/>
    <property type="project" value="UniProtKB-SubCell"/>
</dbReference>
<dbReference type="GO" id="GO:0031902">
    <property type="term" value="C:late endosome membrane"/>
    <property type="evidence" value="ECO:0007669"/>
    <property type="project" value="UniProtKB-SubCell"/>
</dbReference>
<dbReference type="GO" id="GO:0005886">
    <property type="term" value="C:plasma membrane"/>
    <property type="evidence" value="ECO:0000250"/>
    <property type="project" value="UniProtKB"/>
</dbReference>
<dbReference type="GO" id="GO:0043235">
    <property type="term" value="C:receptor complex"/>
    <property type="evidence" value="ECO:0000318"/>
    <property type="project" value="GO_Central"/>
</dbReference>
<dbReference type="GO" id="GO:0055038">
    <property type="term" value="C:recycling endosome membrane"/>
    <property type="evidence" value="ECO:0007669"/>
    <property type="project" value="UniProtKB-SubCell"/>
</dbReference>
<dbReference type="GO" id="GO:0005524">
    <property type="term" value="F:ATP binding"/>
    <property type="evidence" value="ECO:0007669"/>
    <property type="project" value="UniProtKB-KW"/>
</dbReference>
<dbReference type="GO" id="GO:0048406">
    <property type="term" value="F:nerve growth factor binding"/>
    <property type="evidence" value="ECO:0000250"/>
    <property type="project" value="UniProtKB"/>
</dbReference>
<dbReference type="GO" id="GO:0010465">
    <property type="term" value="F:nerve growth factor receptor activity"/>
    <property type="evidence" value="ECO:0000250"/>
    <property type="project" value="UniProtKB"/>
</dbReference>
<dbReference type="GO" id="GO:0043121">
    <property type="term" value="F:neurotrophin binding"/>
    <property type="evidence" value="ECO:0000318"/>
    <property type="project" value="GO_Central"/>
</dbReference>
<dbReference type="GO" id="GO:0005030">
    <property type="term" value="F:neurotrophin receptor activity"/>
    <property type="evidence" value="ECO:0000318"/>
    <property type="project" value="GO_Central"/>
</dbReference>
<dbReference type="GO" id="GO:0042803">
    <property type="term" value="F:protein homodimerization activity"/>
    <property type="evidence" value="ECO:0000250"/>
    <property type="project" value="UniProtKB"/>
</dbReference>
<dbReference type="GO" id="GO:0004714">
    <property type="term" value="F:transmembrane receptor protein tyrosine kinase activity"/>
    <property type="evidence" value="ECO:0000250"/>
    <property type="project" value="UniProtKB"/>
</dbReference>
<dbReference type="GO" id="GO:0060385">
    <property type="term" value="P:axonogenesis involved in innervation"/>
    <property type="evidence" value="ECO:0000250"/>
    <property type="project" value="UniProtKB"/>
</dbReference>
<dbReference type="GO" id="GO:0007169">
    <property type="term" value="P:cell surface receptor protein tyrosine kinase signaling pathway"/>
    <property type="evidence" value="ECO:0000318"/>
    <property type="project" value="GO_Central"/>
</dbReference>
<dbReference type="GO" id="GO:1990090">
    <property type="term" value="P:cellular response to nerve growth factor stimulus"/>
    <property type="evidence" value="ECO:0000318"/>
    <property type="project" value="GO_Central"/>
</dbReference>
<dbReference type="GO" id="GO:0008285">
    <property type="term" value="P:negative regulation of cell population proliferation"/>
    <property type="evidence" value="ECO:0000250"/>
    <property type="project" value="UniProtKB"/>
</dbReference>
<dbReference type="GO" id="GO:0043524">
    <property type="term" value="P:negative regulation of neuron apoptotic process"/>
    <property type="evidence" value="ECO:0000250"/>
    <property type="project" value="UniProtKB"/>
</dbReference>
<dbReference type="GO" id="GO:0038180">
    <property type="term" value="P:nerve growth factor signaling pathway"/>
    <property type="evidence" value="ECO:0000318"/>
    <property type="project" value="GO_Central"/>
</dbReference>
<dbReference type="GO" id="GO:0048011">
    <property type="term" value="P:neurotrophin TRK receptor signaling pathway"/>
    <property type="evidence" value="ECO:0000250"/>
    <property type="project" value="UniProtKB"/>
</dbReference>
<dbReference type="GO" id="GO:0070374">
    <property type="term" value="P:positive regulation of ERK1 and ERK2 cascade"/>
    <property type="evidence" value="ECO:0000250"/>
    <property type="project" value="UniProtKB"/>
</dbReference>
<dbReference type="GO" id="GO:0043547">
    <property type="term" value="P:positive regulation of GTPase activity"/>
    <property type="evidence" value="ECO:0000250"/>
    <property type="project" value="UniProtKB"/>
</dbReference>
<dbReference type="GO" id="GO:0010976">
    <property type="term" value="P:positive regulation of neuron projection development"/>
    <property type="evidence" value="ECO:0000250"/>
    <property type="project" value="UniProtKB"/>
</dbReference>
<dbReference type="GO" id="GO:0051092">
    <property type="term" value="P:positive regulation of NF-kappaB transcription factor activity"/>
    <property type="evidence" value="ECO:0000250"/>
    <property type="project" value="UniProtKB"/>
</dbReference>
<dbReference type="GO" id="GO:0051897">
    <property type="term" value="P:positive regulation of phosphatidylinositol 3-kinase/protein kinase B signal transduction"/>
    <property type="evidence" value="ECO:0000318"/>
    <property type="project" value="GO_Central"/>
</dbReference>
<dbReference type="GO" id="GO:0046579">
    <property type="term" value="P:positive regulation of Ras protein signal transduction"/>
    <property type="evidence" value="ECO:0000250"/>
    <property type="project" value="UniProtKB"/>
</dbReference>
<dbReference type="GO" id="GO:0046777">
    <property type="term" value="P:protein autophosphorylation"/>
    <property type="evidence" value="ECO:0000250"/>
    <property type="project" value="UniProtKB"/>
</dbReference>
<dbReference type="GO" id="GO:0006468">
    <property type="term" value="P:protein phosphorylation"/>
    <property type="evidence" value="ECO:0000250"/>
    <property type="project" value="UniProtKB"/>
</dbReference>
<dbReference type="GO" id="GO:0048485">
    <property type="term" value="P:sympathetic nervous system development"/>
    <property type="evidence" value="ECO:0000250"/>
    <property type="project" value="UniProtKB"/>
</dbReference>
<dbReference type="CDD" id="cd05092">
    <property type="entry name" value="PTKc_TrkA"/>
    <property type="match status" value="1"/>
</dbReference>
<dbReference type="FunFam" id="1.10.510.10:FF:000034">
    <property type="entry name" value="Tyrosine-protein kinase receptor"/>
    <property type="match status" value="1"/>
</dbReference>
<dbReference type="FunFam" id="2.60.40.10:FF:000522">
    <property type="entry name" value="Tyrosine-protein kinase receptor"/>
    <property type="match status" value="1"/>
</dbReference>
<dbReference type="FunFam" id="3.30.200.20:FF:000033">
    <property type="entry name" value="Tyrosine-protein kinase receptor"/>
    <property type="match status" value="1"/>
</dbReference>
<dbReference type="FunFam" id="3.80.10.10:FF:000163">
    <property type="entry name" value="Tyrosine-protein kinase receptor"/>
    <property type="match status" value="1"/>
</dbReference>
<dbReference type="Gene3D" id="2.60.40.10">
    <property type="entry name" value="Immunoglobulins"/>
    <property type="match status" value="2"/>
</dbReference>
<dbReference type="Gene3D" id="3.30.200.20">
    <property type="entry name" value="Phosphorylase Kinase, domain 1"/>
    <property type="match status" value="1"/>
</dbReference>
<dbReference type="Gene3D" id="3.80.10.10">
    <property type="entry name" value="Ribonuclease Inhibitor"/>
    <property type="match status" value="1"/>
</dbReference>
<dbReference type="Gene3D" id="1.10.510.10">
    <property type="entry name" value="Transferase(Phosphotransferase) domain 1"/>
    <property type="match status" value="1"/>
</dbReference>
<dbReference type="InterPro" id="IPR000483">
    <property type="entry name" value="Cys-rich_flank_reg_C"/>
</dbReference>
<dbReference type="InterPro" id="IPR007110">
    <property type="entry name" value="Ig-like_dom"/>
</dbReference>
<dbReference type="InterPro" id="IPR036179">
    <property type="entry name" value="Ig-like_dom_sf"/>
</dbReference>
<dbReference type="InterPro" id="IPR013783">
    <property type="entry name" value="Ig-like_fold"/>
</dbReference>
<dbReference type="InterPro" id="IPR013098">
    <property type="entry name" value="Ig_I-set"/>
</dbReference>
<dbReference type="InterPro" id="IPR003599">
    <property type="entry name" value="Ig_sub"/>
</dbReference>
<dbReference type="InterPro" id="IPR011009">
    <property type="entry name" value="Kinase-like_dom_sf"/>
</dbReference>
<dbReference type="InterPro" id="IPR001611">
    <property type="entry name" value="Leu-rich_rpt"/>
</dbReference>
<dbReference type="InterPro" id="IPR032675">
    <property type="entry name" value="LRR_dom_sf"/>
</dbReference>
<dbReference type="InterPro" id="IPR020777">
    <property type="entry name" value="NTRK"/>
</dbReference>
<dbReference type="InterPro" id="IPR020461">
    <property type="entry name" value="NTRK1"/>
</dbReference>
<dbReference type="InterPro" id="IPR031635">
    <property type="entry name" value="NTRK_LRRCT"/>
</dbReference>
<dbReference type="InterPro" id="IPR000719">
    <property type="entry name" value="Prot_kinase_dom"/>
</dbReference>
<dbReference type="InterPro" id="IPR017441">
    <property type="entry name" value="Protein_kinase_ATP_BS"/>
</dbReference>
<dbReference type="InterPro" id="IPR050122">
    <property type="entry name" value="RTK"/>
</dbReference>
<dbReference type="InterPro" id="IPR001245">
    <property type="entry name" value="Ser-Thr/Tyr_kinase_cat_dom"/>
</dbReference>
<dbReference type="InterPro" id="IPR040665">
    <property type="entry name" value="TrkA_TMD"/>
</dbReference>
<dbReference type="InterPro" id="IPR008266">
    <property type="entry name" value="Tyr_kinase_AS"/>
</dbReference>
<dbReference type="InterPro" id="IPR020635">
    <property type="entry name" value="Tyr_kinase_cat_dom"/>
</dbReference>
<dbReference type="InterPro" id="IPR002011">
    <property type="entry name" value="Tyr_kinase_rcpt_2_CS"/>
</dbReference>
<dbReference type="PANTHER" id="PTHR24416:SF370">
    <property type="entry name" value="HIGH AFFINITY NERVE GROWTH FACTOR RECEPTOR"/>
    <property type="match status" value="1"/>
</dbReference>
<dbReference type="PANTHER" id="PTHR24416">
    <property type="entry name" value="TYROSINE-PROTEIN KINASE RECEPTOR"/>
    <property type="match status" value="1"/>
</dbReference>
<dbReference type="Pfam" id="PF07679">
    <property type="entry name" value="I-set"/>
    <property type="match status" value="1"/>
</dbReference>
<dbReference type="Pfam" id="PF13855">
    <property type="entry name" value="LRR_8"/>
    <property type="match status" value="1"/>
</dbReference>
<dbReference type="Pfam" id="PF16920">
    <property type="entry name" value="LRRCT_2"/>
    <property type="match status" value="1"/>
</dbReference>
<dbReference type="Pfam" id="PF07714">
    <property type="entry name" value="PK_Tyr_Ser-Thr"/>
    <property type="match status" value="1"/>
</dbReference>
<dbReference type="Pfam" id="PF18613">
    <property type="entry name" value="TrkA_TMD"/>
    <property type="match status" value="1"/>
</dbReference>
<dbReference type="PRINTS" id="PR01939">
    <property type="entry name" value="NTKRECEPTOR"/>
</dbReference>
<dbReference type="PRINTS" id="PR01940">
    <property type="entry name" value="NTKRECEPTOR1"/>
</dbReference>
<dbReference type="PRINTS" id="PR00109">
    <property type="entry name" value="TYRKINASE"/>
</dbReference>
<dbReference type="SMART" id="SM00409">
    <property type="entry name" value="IG"/>
    <property type="match status" value="1"/>
</dbReference>
<dbReference type="SMART" id="SM00082">
    <property type="entry name" value="LRRCT"/>
    <property type="match status" value="1"/>
</dbReference>
<dbReference type="SMART" id="SM00219">
    <property type="entry name" value="TyrKc"/>
    <property type="match status" value="1"/>
</dbReference>
<dbReference type="SUPFAM" id="SSF48726">
    <property type="entry name" value="Immunoglobulin"/>
    <property type="match status" value="2"/>
</dbReference>
<dbReference type="SUPFAM" id="SSF52058">
    <property type="entry name" value="L domain-like"/>
    <property type="match status" value="1"/>
</dbReference>
<dbReference type="SUPFAM" id="SSF56112">
    <property type="entry name" value="Protein kinase-like (PK-like)"/>
    <property type="match status" value="1"/>
</dbReference>
<dbReference type="PROSITE" id="PS50835">
    <property type="entry name" value="IG_LIKE"/>
    <property type="match status" value="1"/>
</dbReference>
<dbReference type="PROSITE" id="PS00107">
    <property type="entry name" value="PROTEIN_KINASE_ATP"/>
    <property type="match status" value="1"/>
</dbReference>
<dbReference type="PROSITE" id="PS50011">
    <property type="entry name" value="PROTEIN_KINASE_DOM"/>
    <property type="match status" value="1"/>
</dbReference>
<dbReference type="PROSITE" id="PS00109">
    <property type="entry name" value="PROTEIN_KINASE_TYR"/>
    <property type="match status" value="1"/>
</dbReference>
<dbReference type="PROSITE" id="PS00239">
    <property type="entry name" value="RECEPTOR_TYR_KIN_II"/>
    <property type="match status" value="1"/>
</dbReference>
<feature type="signal peptide" evidence="5">
    <location>
        <begin position="1" status="less than"/>
        <end position="14"/>
    </location>
</feature>
<feature type="chain" id="PRO_0000016726" description="High affinity nerve growth factor receptor">
    <location>
        <begin position="15"/>
        <end position="778"/>
    </location>
</feature>
<feature type="topological domain" description="Extracellular" evidence="5">
    <location>
        <begin position="15"/>
        <end position="400"/>
    </location>
</feature>
<feature type="transmembrane region" description="Helical" evidence="5">
    <location>
        <begin position="401"/>
        <end position="421"/>
    </location>
</feature>
<feature type="topological domain" description="Cytoplasmic" evidence="5">
    <location>
        <begin position="422"/>
        <end position="778"/>
    </location>
</feature>
<feature type="repeat" description="LRR 1">
    <location>
        <begin position="71"/>
        <end position="92"/>
    </location>
</feature>
<feature type="repeat" description="LRR 2">
    <location>
        <begin position="95"/>
        <end position="116"/>
    </location>
</feature>
<feature type="domain" description="LRRCT">
    <location>
        <begin position="127"/>
        <end position="175"/>
    </location>
</feature>
<feature type="domain" description="Ig-like C2-type 1">
    <location>
        <begin position="175"/>
        <end position="262"/>
    </location>
</feature>
<feature type="domain" description="Ig-like C2-type 2">
    <location>
        <begin position="281"/>
        <end position="347"/>
    </location>
</feature>
<feature type="domain" description="Protein kinase" evidence="7">
    <location>
        <begin position="493"/>
        <end position="763"/>
    </location>
</feature>
<feature type="active site" description="Proton acceptor" evidence="7 8">
    <location>
        <position position="633"/>
    </location>
</feature>
<feature type="binding site" evidence="7">
    <location>
        <begin position="499"/>
        <end position="507"/>
    </location>
    <ligand>
        <name>ATP</name>
        <dbReference type="ChEBI" id="CHEBI:30616"/>
    </ligand>
</feature>
<feature type="binding site" evidence="7">
    <location>
        <position position="527"/>
    </location>
    <ligand>
        <name>ATP</name>
        <dbReference type="ChEBI" id="CHEBI:30616"/>
    </ligand>
</feature>
<feature type="site" description="Interaction with SHC1" evidence="1">
    <location>
        <position position="479"/>
    </location>
</feature>
<feature type="site" description="Interaction with PLC-gamma-1" evidence="1">
    <location>
        <position position="773"/>
    </location>
</feature>
<feature type="modified residue" description="Phosphotyrosine; by autocatalysis" evidence="2">
    <location>
        <position position="479"/>
    </location>
</feature>
<feature type="modified residue" description="Phosphotyrosine; by autocatalysis" evidence="2">
    <location>
        <position position="659"/>
    </location>
</feature>
<feature type="modified residue" description="Phosphotyrosine; by autocatalysis" evidence="2">
    <location>
        <position position="663"/>
    </location>
</feature>
<feature type="modified residue" description="Phosphotyrosine; by autocatalysis" evidence="2">
    <location>
        <position position="664"/>
    </location>
</feature>
<feature type="modified residue" description="Phosphotyrosine; by autocatalysis" evidence="2">
    <location>
        <position position="773"/>
    </location>
</feature>
<feature type="glycosylation site" description="N-linked (GlcNAc...) asparagine" evidence="5">
    <location>
        <position position="100"/>
    </location>
</feature>
<feature type="glycosylation site" description="N-linked (GlcNAc...) asparagine" evidence="5">
    <location>
        <position position="130"/>
    </location>
</feature>
<feature type="glycosylation site" description="N-linked (GlcNAc...) asparagine" evidence="5">
    <location>
        <position position="143"/>
    </location>
</feature>
<feature type="glycosylation site" description="N-linked (GlcNAc...) asparagine" evidence="5">
    <location>
        <position position="151"/>
    </location>
</feature>
<feature type="glycosylation site" description="N-linked (GlcNAc...) asparagine" evidence="5">
    <location>
        <position position="194"/>
    </location>
</feature>
<feature type="glycosylation site" description="N-linked (GlcNAc...) asparagine" evidence="5">
    <location>
        <position position="234"/>
    </location>
</feature>
<feature type="glycosylation site" description="N-linked (GlcNAc...) asparagine" evidence="5">
    <location>
        <position position="262"/>
    </location>
</feature>
<feature type="glycosylation site" description="N-linked (GlcNAc...) asparagine" evidence="5">
    <location>
        <position position="300"/>
    </location>
</feature>
<feature type="glycosylation site" description="N-linked (GlcNAc...) asparagine" evidence="5">
    <location>
        <position position="320"/>
    </location>
</feature>
<feature type="glycosylation site" description="N-linked (GlcNAc...) asparagine" evidence="5">
    <location>
        <position position="340"/>
    </location>
</feature>
<feature type="glycosylation site" description="N-linked (GlcNAc...) asparagine" evidence="5">
    <location>
        <position position="384"/>
    </location>
</feature>
<feature type="disulfide bond" evidence="2">
    <location>
        <begin position="18"/>
        <end position="20"/>
    </location>
</feature>
<feature type="disulfide bond" evidence="6">
    <location>
        <begin position="133"/>
        <end position="173"/>
    </location>
</feature>
<feature type="disulfide bond" evidence="2">
    <location>
        <begin position="282"/>
        <end position="327"/>
    </location>
</feature>
<feature type="non-terminal residue">
    <location>
        <position position="1"/>
    </location>
</feature>
<sequence length="778" mass="87339">WGCLRLPLPLCHALAAHCRCPASHTLRCREPLTVSSLSALLLGAHRPTDVIIENQALLTSLTRDDTRMLWDLRHLTISNSGLQYISDDAFQDNHRLSHVNLSFNALTSLSWKTFQHLPLQELTLEGNPFNCSCGIRWLQLWQNGSRAELGNQSLLCWEGSMLVALDSHPLHDCEPPTARIEHPDVVLRQGDSVNLTCHIWGEPSATGEWVLPHVGSEPSVTKLSEWELVLEINNISSSLNHKDLTCRAENSVGLAEDSVMLNVTFPPVILLLSEAIPQHFWCIPFSVDSNPTPRILWLFNGSMLPEGPYIHTRIVEYEPNSTVLHGCLQLNRPTHVNNGNYTLVVQNPLGRAARSIQGRFMDNPFSFSPEEPIPVSISPLGTRNSSLEGPVETADEHTFGVSVAVALAVFASLFLSVMLIALNKCGHRSKFGINRSAVLAPEDGLAMSLHFMTLGSSPVSSTESKLDGLKSNFIENPQYFCNACVHHVQRRDIVLKWELGEGAFGKVFLAECSHLLPEQEKTLVAVKALKEVTENARLDFQREAELLTVLQHEHIVKFYGVCTEGDPLIMVFEYMKHGDLNRFLRSHGPDAKILDQGQGQPCGQLTLSHMLQIATQIASGMVYLASLHFVHRDLATRNCLVGHDLVVKIGDFGMSRDIYSTDYYRVGGRTMLPIRWMPPESILYRKFTTESDIWSFGVVLWEIFTYGKQPWYQLSNTEAIECITQGRELERPRTCPSEVYDIMQSCWQREPQQRSIQDIHSRLQALVKTPPIYLDILG</sequence>
<gene>
    <name type="primary">NTRK1</name>
    <name type="synonym">TRKA</name>
</gene>
<accession>Q91009</accession>
<proteinExistence type="evidence at protein level"/>
<reference key="1">
    <citation type="journal article" date="1996" name="J. Neurosci. Res.">
        <title>Molecular cloning of the chicken trkA and its expression in early peripheral ganglia.</title>
        <authorList>
            <person name="Backstrom A."/>
            <person name="Soderstrom S."/>
            <person name="Kylberg A."/>
            <person name="Ebendal T."/>
        </authorList>
    </citation>
    <scope>NUCLEOTIDE SEQUENCE [MRNA]</scope>
    <scope>DEVELOPMENTAL STAGE</scope>
    <source>
        <tissue>Sympathetic ganglion</tissue>
    </source>
</reference>
<reference key="2">
    <citation type="journal article" date="2007" name="Biochim. Biophys. Acta">
        <title>PTPsigma binds and dephosphorylates neurotrophin receptors and can suppress NGF-dependent neurite outgrowth from sensory neurons.</title>
        <authorList>
            <person name="Faux C."/>
            <person name="Hawadle M."/>
            <person name="Nixon J."/>
            <person name="Wallace A."/>
            <person name="Lee S."/>
            <person name="Murray S."/>
            <person name="Stoker A."/>
        </authorList>
    </citation>
    <scope>INTERACTION WITH PTPRS</scope>
</reference>
<evidence type="ECO:0000250" key="1"/>
<evidence type="ECO:0000250" key="2">
    <source>
        <dbReference type="UniProtKB" id="P04629"/>
    </source>
</evidence>
<evidence type="ECO:0000250" key="3">
    <source>
        <dbReference type="UniProtKB" id="P35739"/>
    </source>
</evidence>
<evidence type="ECO:0000250" key="4">
    <source>
        <dbReference type="UniProtKB" id="Q3UFB7"/>
    </source>
</evidence>
<evidence type="ECO:0000255" key="5"/>
<evidence type="ECO:0000255" key="6">
    <source>
        <dbReference type="PROSITE-ProRule" id="PRU00114"/>
    </source>
</evidence>
<evidence type="ECO:0000255" key="7">
    <source>
        <dbReference type="PROSITE-ProRule" id="PRU00159"/>
    </source>
</evidence>
<evidence type="ECO:0000255" key="8">
    <source>
        <dbReference type="PROSITE-ProRule" id="PRU10028"/>
    </source>
</evidence>
<evidence type="ECO:0000269" key="9">
    <source>
    </source>
</evidence>
<evidence type="ECO:0000269" key="10">
    <source>
    </source>
</evidence>